<gene>
    <name evidence="1" type="primary">hemA</name>
    <name type="ordered locus">cgR_0488</name>
</gene>
<organism>
    <name type="scientific">Corynebacterium glutamicum (strain R)</name>
    <dbReference type="NCBI Taxonomy" id="340322"/>
    <lineage>
        <taxon>Bacteria</taxon>
        <taxon>Bacillati</taxon>
        <taxon>Actinomycetota</taxon>
        <taxon>Actinomycetes</taxon>
        <taxon>Mycobacteriales</taxon>
        <taxon>Corynebacteriaceae</taxon>
        <taxon>Corynebacterium</taxon>
    </lineage>
</organism>
<proteinExistence type="inferred from homology"/>
<accession>A4QB58</accession>
<accession>Q8GMZ2</accession>
<accession>Q8NT91</accession>
<reference key="1">
    <citation type="submission" date="2002-09" db="EMBL/GenBank/DDBJ databases">
        <title>Evolutionary considerations on the heme biosynthetic pathway of Corynebacteria and Mycobacteria.</title>
        <authorList>
            <person name="Vertes A.A."/>
            <person name="Kos P.B."/>
            <person name="Inui M."/>
            <person name="Yukawa H."/>
        </authorList>
    </citation>
    <scope>NUCLEOTIDE SEQUENCE [GENOMIC DNA]</scope>
</reference>
<reference key="2">
    <citation type="journal article" date="2007" name="Microbiology">
        <title>Comparative analysis of the Corynebacterium glutamicum group and complete genome sequence of strain R.</title>
        <authorList>
            <person name="Yukawa H."/>
            <person name="Omumasaba C.A."/>
            <person name="Nonaka H."/>
            <person name="Kos P."/>
            <person name="Okai N."/>
            <person name="Suzuki N."/>
            <person name="Suda M."/>
            <person name="Tsuge Y."/>
            <person name="Watanabe J."/>
            <person name="Ikeda Y."/>
            <person name="Vertes A.A."/>
            <person name="Inui M."/>
        </authorList>
    </citation>
    <scope>NUCLEOTIDE SEQUENCE [LARGE SCALE GENOMIC DNA]</scope>
    <source>
        <strain>R</strain>
    </source>
</reference>
<evidence type="ECO:0000255" key="1">
    <source>
        <dbReference type="HAMAP-Rule" id="MF_00087"/>
    </source>
</evidence>
<evidence type="ECO:0000305" key="2"/>
<keyword id="KW-0521">NADP</keyword>
<keyword id="KW-0560">Oxidoreductase</keyword>
<keyword id="KW-0627">Porphyrin biosynthesis</keyword>
<dbReference type="EC" id="1.2.1.70" evidence="1"/>
<dbReference type="EMBL" id="AF545862">
    <property type="protein sequence ID" value="AAN38289.1"/>
    <property type="molecule type" value="Genomic_DNA"/>
</dbReference>
<dbReference type="EMBL" id="AP009044">
    <property type="protein sequence ID" value="BAF53455.1"/>
    <property type="status" value="ALT_INIT"/>
    <property type="molecule type" value="Genomic_DNA"/>
</dbReference>
<dbReference type="RefSeq" id="WP_173328339.1">
    <property type="nucleotide sequence ID" value="NC_009342.1"/>
</dbReference>
<dbReference type="SMR" id="A4QB58"/>
<dbReference type="KEGG" id="cgt:cgR_0488"/>
<dbReference type="HOGENOM" id="CLU_035113_4_0_11"/>
<dbReference type="PhylomeDB" id="A4QB58"/>
<dbReference type="UniPathway" id="UPA00251">
    <property type="reaction ID" value="UER00316"/>
</dbReference>
<dbReference type="Proteomes" id="UP000006698">
    <property type="component" value="Chromosome"/>
</dbReference>
<dbReference type="GO" id="GO:0008883">
    <property type="term" value="F:glutamyl-tRNA reductase activity"/>
    <property type="evidence" value="ECO:0007669"/>
    <property type="project" value="UniProtKB-UniRule"/>
</dbReference>
<dbReference type="GO" id="GO:0050661">
    <property type="term" value="F:NADP binding"/>
    <property type="evidence" value="ECO:0007669"/>
    <property type="project" value="InterPro"/>
</dbReference>
<dbReference type="GO" id="GO:0019353">
    <property type="term" value="P:protoporphyrinogen IX biosynthetic process from glutamate"/>
    <property type="evidence" value="ECO:0007669"/>
    <property type="project" value="TreeGrafter"/>
</dbReference>
<dbReference type="CDD" id="cd05213">
    <property type="entry name" value="NAD_bind_Glutamyl_tRNA_reduct"/>
    <property type="match status" value="1"/>
</dbReference>
<dbReference type="FunFam" id="3.30.460.30:FF:000001">
    <property type="entry name" value="Glutamyl-tRNA reductase"/>
    <property type="match status" value="1"/>
</dbReference>
<dbReference type="Gene3D" id="3.30.460.30">
    <property type="entry name" value="Glutamyl-tRNA reductase, N-terminal domain"/>
    <property type="match status" value="1"/>
</dbReference>
<dbReference type="Gene3D" id="3.40.50.720">
    <property type="entry name" value="NAD(P)-binding Rossmann-like Domain"/>
    <property type="match status" value="1"/>
</dbReference>
<dbReference type="HAMAP" id="MF_00087">
    <property type="entry name" value="Glu_tRNA_reductase"/>
    <property type="match status" value="1"/>
</dbReference>
<dbReference type="InterPro" id="IPR000343">
    <property type="entry name" value="4pyrrol_synth_GluRdtase"/>
</dbReference>
<dbReference type="InterPro" id="IPR015896">
    <property type="entry name" value="4pyrrol_synth_GluRdtase_dimer"/>
</dbReference>
<dbReference type="InterPro" id="IPR015895">
    <property type="entry name" value="4pyrrol_synth_GluRdtase_N"/>
</dbReference>
<dbReference type="InterPro" id="IPR018214">
    <property type="entry name" value="GluRdtase_CS"/>
</dbReference>
<dbReference type="InterPro" id="IPR036453">
    <property type="entry name" value="GluRdtase_dimer_dom_sf"/>
</dbReference>
<dbReference type="InterPro" id="IPR036343">
    <property type="entry name" value="GluRdtase_N_sf"/>
</dbReference>
<dbReference type="InterPro" id="IPR036291">
    <property type="entry name" value="NAD(P)-bd_dom_sf"/>
</dbReference>
<dbReference type="InterPro" id="IPR006151">
    <property type="entry name" value="Shikm_DH/Glu-tRNA_Rdtase"/>
</dbReference>
<dbReference type="NCBIfam" id="TIGR01035">
    <property type="entry name" value="hemA"/>
    <property type="match status" value="1"/>
</dbReference>
<dbReference type="NCBIfam" id="NF000744">
    <property type="entry name" value="PRK00045.1-3"/>
    <property type="match status" value="1"/>
</dbReference>
<dbReference type="PANTHER" id="PTHR43013">
    <property type="entry name" value="GLUTAMYL-TRNA REDUCTASE"/>
    <property type="match status" value="1"/>
</dbReference>
<dbReference type="PANTHER" id="PTHR43013:SF1">
    <property type="entry name" value="GLUTAMYL-TRNA REDUCTASE"/>
    <property type="match status" value="1"/>
</dbReference>
<dbReference type="Pfam" id="PF00745">
    <property type="entry name" value="GlutR_dimer"/>
    <property type="match status" value="1"/>
</dbReference>
<dbReference type="Pfam" id="PF05201">
    <property type="entry name" value="GlutR_N"/>
    <property type="match status" value="1"/>
</dbReference>
<dbReference type="Pfam" id="PF01488">
    <property type="entry name" value="Shikimate_DH"/>
    <property type="match status" value="1"/>
</dbReference>
<dbReference type="PIRSF" id="PIRSF000445">
    <property type="entry name" value="4pyrrol_synth_GluRdtase"/>
    <property type="match status" value="1"/>
</dbReference>
<dbReference type="SUPFAM" id="SSF69742">
    <property type="entry name" value="Glutamyl tRNA-reductase catalytic, N-terminal domain"/>
    <property type="match status" value="1"/>
</dbReference>
<dbReference type="SUPFAM" id="SSF69075">
    <property type="entry name" value="Glutamyl tRNA-reductase dimerization domain"/>
    <property type="match status" value="1"/>
</dbReference>
<dbReference type="SUPFAM" id="SSF51735">
    <property type="entry name" value="NAD(P)-binding Rossmann-fold domains"/>
    <property type="match status" value="1"/>
</dbReference>
<dbReference type="PROSITE" id="PS00747">
    <property type="entry name" value="GLUTR"/>
    <property type="match status" value="1"/>
</dbReference>
<comment type="function">
    <text evidence="1">Catalyzes the NADPH-dependent reduction of glutamyl-tRNA(Glu) to glutamate 1-semialdehyde (GSA).</text>
</comment>
<comment type="catalytic activity">
    <reaction evidence="1">
        <text>(S)-4-amino-5-oxopentanoate + tRNA(Glu) + NADP(+) = L-glutamyl-tRNA(Glu) + NADPH + H(+)</text>
        <dbReference type="Rhea" id="RHEA:12344"/>
        <dbReference type="Rhea" id="RHEA-COMP:9663"/>
        <dbReference type="Rhea" id="RHEA-COMP:9680"/>
        <dbReference type="ChEBI" id="CHEBI:15378"/>
        <dbReference type="ChEBI" id="CHEBI:57501"/>
        <dbReference type="ChEBI" id="CHEBI:57783"/>
        <dbReference type="ChEBI" id="CHEBI:58349"/>
        <dbReference type="ChEBI" id="CHEBI:78442"/>
        <dbReference type="ChEBI" id="CHEBI:78520"/>
        <dbReference type="EC" id="1.2.1.70"/>
    </reaction>
</comment>
<comment type="pathway">
    <text evidence="1">Porphyrin-containing compound metabolism; protoporphyrin-IX biosynthesis; 5-aminolevulinate from L-glutamyl-tRNA(Glu): step 1/2.</text>
</comment>
<comment type="subunit">
    <text evidence="1">Homodimer.</text>
</comment>
<comment type="domain">
    <text evidence="1">Possesses an unusual extended V-shaped dimeric structure with each monomer consisting of three distinct domains arranged along a curved 'spinal' alpha-helix. The N-terminal catalytic domain specifically recognizes the glutamate moiety of the substrate. The second domain is the NADPH-binding domain, and the third C-terminal domain is responsible for dimerization.</text>
</comment>
<comment type="miscellaneous">
    <text evidence="1">During catalysis, the active site Cys acts as a nucleophile attacking the alpha-carbonyl group of tRNA-bound glutamate with the formation of a thioester intermediate between enzyme and glutamate, and the concomitant release of tRNA(Glu). The thioester intermediate is finally reduced by direct hydride transfer from NADPH, to form the product GSA.</text>
</comment>
<comment type="similarity">
    <text evidence="1">Belongs to the glutamyl-tRNA reductase family.</text>
</comment>
<comment type="sequence caution" evidence="2">
    <conflict type="erroneous initiation">
        <sequence resource="EMBL-CDS" id="BAF53455"/>
    </conflict>
</comment>
<protein>
    <recommendedName>
        <fullName evidence="1">Glutamyl-tRNA reductase</fullName>
        <shortName evidence="1">GluTR</shortName>
        <ecNumber evidence="1">1.2.1.70</ecNumber>
    </recommendedName>
</protein>
<name>HEM1_CORGB</name>
<feature type="chain" id="PRO_0000291541" description="Glutamyl-tRNA reductase">
    <location>
        <begin position="1"/>
        <end position="463"/>
    </location>
</feature>
<feature type="active site" description="Nucleophile" evidence="1">
    <location>
        <position position="50"/>
    </location>
</feature>
<feature type="binding site" evidence="1">
    <location>
        <begin position="49"/>
        <end position="52"/>
    </location>
    <ligand>
        <name>substrate</name>
    </ligand>
</feature>
<feature type="binding site" evidence="1">
    <location>
        <position position="109"/>
    </location>
    <ligand>
        <name>substrate</name>
    </ligand>
</feature>
<feature type="binding site" evidence="1">
    <location>
        <begin position="114"/>
        <end position="116"/>
    </location>
    <ligand>
        <name>substrate</name>
    </ligand>
</feature>
<feature type="binding site" evidence="1">
    <location>
        <position position="120"/>
    </location>
    <ligand>
        <name>substrate</name>
    </ligand>
</feature>
<feature type="binding site" evidence="1">
    <location>
        <begin position="196"/>
        <end position="201"/>
    </location>
    <ligand>
        <name>NADP(+)</name>
        <dbReference type="ChEBI" id="CHEBI:58349"/>
    </ligand>
</feature>
<feature type="site" description="Important for activity" evidence="1">
    <location>
        <position position="99"/>
    </location>
</feature>
<sequence length="463" mass="49229">MSVLIVGMSHRSAPVSLLERLSMDDSVRGETTQALLGRASLSEALIVSTCNRLEVYTVTSSFHTGVNDVVEVLHEASGVDIETLRGYLYVRYADAAAEHMLVVTSGLDSMVLGEQQIIGQVRTAYQAANEYGSVGPALHSLTQTALHTGKRVHSETAIDDAGASMVSFAVDRALVQMGLDSEAEAPLSGKTALVLGAGAMSSLAATHLGRAGISKLIMANRTLERAERLAEHSLEAGVPAEVVEYDQRASAYNRVDLVVSATGADDFTVKPEDIPEGASLMLVDLSMPRDIDDACADLPGVDLVNIERLHKASREGGSGMAPSEEEALAIVREELDSFTSEQRIRDIVPAVSALRRQAASVGSDELDRLRQRAPGISEVEWGEVEKTVRRVVDKLLHQPTVRVKELAARSGSISYDSALQELFGLESLASTAAPATTSVNASELPDAGIVAFVNAPSATQTRE</sequence>